<keyword id="KW-0963">Cytoplasm</keyword>
<keyword id="KW-0342">GTP-binding</keyword>
<keyword id="KW-0436">Ligase</keyword>
<keyword id="KW-0460">Magnesium</keyword>
<keyword id="KW-0479">Metal-binding</keyword>
<keyword id="KW-0547">Nucleotide-binding</keyword>
<keyword id="KW-0658">Purine biosynthesis</keyword>
<evidence type="ECO:0000255" key="1">
    <source>
        <dbReference type="HAMAP-Rule" id="MF_00011"/>
    </source>
</evidence>
<evidence type="ECO:0000305" key="2"/>
<proteinExistence type="inferred from homology"/>
<comment type="function">
    <text evidence="1">Plays an important role in the de novo pathway of purine nucleotide biosynthesis. Catalyzes the first committed step in the biosynthesis of AMP from IMP.</text>
</comment>
<comment type="catalytic activity">
    <reaction evidence="1">
        <text>IMP + L-aspartate + GTP = N(6)-(1,2-dicarboxyethyl)-AMP + GDP + phosphate + 2 H(+)</text>
        <dbReference type="Rhea" id="RHEA:15753"/>
        <dbReference type="ChEBI" id="CHEBI:15378"/>
        <dbReference type="ChEBI" id="CHEBI:29991"/>
        <dbReference type="ChEBI" id="CHEBI:37565"/>
        <dbReference type="ChEBI" id="CHEBI:43474"/>
        <dbReference type="ChEBI" id="CHEBI:57567"/>
        <dbReference type="ChEBI" id="CHEBI:58053"/>
        <dbReference type="ChEBI" id="CHEBI:58189"/>
        <dbReference type="EC" id="6.3.4.4"/>
    </reaction>
</comment>
<comment type="cofactor">
    <cofactor evidence="1">
        <name>Mg(2+)</name>
        <dbReference type="ChEBI" id="CHEBI:18420"/>
    </cofactor>
    <text evidence="1">Binds 1 Mg(2+) ion per subunit.</text>
</comment>
<comment type="pathway">
    <text evidence="1">Purine metabolism; AMP biosynthesis via de novo pathway; AMP from IMP: step 1/2.</text>
</comment>
<comment type="subunit">
    <text evidence="1">Homodimer.</text>
</comment>
<comment type="subcellular location">
    <subcellularLocation>
        <location evidence="1">Cytoplasm</location>
    </subcellularLocation>
</comment>
<comment type="similarity">
    <text evidence="1">Belongs to the adenylosuccinate synthetase family.</text>
</comment>
<comment type="sequence caution" evidence="2">
    <conflict type="erroneous initiation">
        <sequence resource="EMBL-CDS" id="AAT42779"/>
    </conflict>
</comment>
<gene>
    <name evidence="1" type="primary">purA</name>
    <name type="ordered locus">PTO0194</name>
</gene>
<protein>
    <recommendedName>
        <fullName evidence="1">Adenylosuccinate synthetase</fullName>
        <shortName evidence="1">AMPSase</shortName>
        <shortName evidence="1">AdSS</shortName>
        <ecNumber evidence="1">6.3.4.4</ecNumber>
    </recommendedName>
    <alternativeName>
        <fullName evidence="1">IMP--aspartate ligase</fullName>
    </alternativeName>
</protein>
<feature type="chain" id="PRO_0000095274" description="Adenylosuccinate synthetase">
    <location>
        <begin position="1"/>
        <end position="416"/>
    </location>
</feature>
<feature type="active site" description="Proton acceptor" evidence="1">
    <location>
        <position position="12"/>
    </location>
</feature>
<feature type="active site" description="Proton donor" evidence="1">
    <location>
        <position position="40"/>
    </location>
</feature>
<feature type="binding site" evidence="1">
    <location>
        <begin position="11"/>
        <end position="17"/>
    </location>
    <ligand>
        <name>GTP</name>
        <dbReference type="ChEBI" id="CHEBI:37565"/>
    </ligand>
</feature>
<feature type="binding site" description="in other chain" evidence="1">
    <location>
        <begin position="12"/>
        <end position="15"/>
    </location>
    <ligand>
        <name>IMP</name>
        <dbReference type="ChEBI" id="CHEBI:58053"/>
        <note>ligand shared between dimeric partners</note>
    </ligand>
</feature>
<feature type="binding site" evidence="1">
    <location>
        <position position="12"/>
    </location>
    <ligand>
        <name>Mg(2+)</name>
        <dbReference type="ChEBI" id="CHEBI:18420"/>
    </ligand>
</feature>
<feature type="binding site" description="in other chain" evidence="1">
    <location>
        <begin position="37"/>
        <end position="40"/>
    </location>
    <ligand>
        <name>IMP</name>
        <dbReference type="ChEBI" id="CHEBI:58053"/>
        <note>ligand shared between dimeric partners</note>
    </ligand>
</feature>
<feature type="binding site" evidence="1">
    <location>
        <begin position="39"/>
        <end position="41"/>
    </location>
    <ligand>
        <name>GTP</name>
        <dbReference type="ChEBI" id="CHEBI:37565"/>
    </ligand>
</feature>
<feature type="binding site" evidence="1">
    <location>
        <position position="39"/>
    </location>
    <ligand>
        <name>Mg(2+)</name>
        <dbReference type="ChEBI" id="CHEBI:18420"/>
    </ligand>
</feature>
<feature type="binding site" description="in other chain" evidence="1">
    <location>
        <position position="125"/>
    </location>
    <ligand>
        <name>IMP</name>
        <dbReference type="ChEBI" id="CHEBI:58053"/>
        <note>ligand shared between dimeric partners</note>
    </ligand>
</feature>
<feature type="binding site" evidence="1">
    <location>
        <position position="139"/>
    </location>
    <ligand>
        <name>IMP</name>
        <dbReference type="ChEBI" id="CHEBI:58053"/>
        <note>ligand shared between dimeric partners</note>
    </ligand>
</feature>
<feature type="binding site" description="in other chain" evidence="1">
    <location>
        <position position="214"/>
    </location>
    <ligand>
        <name>IMP</name>
        <dbReference type="ChEBI" id="CHEBI:58053"/>
        <note>ligand shared between dimeric partners</note>
    </ligand>
</feature>
<feature type="binding site" description="in other chain" evidence="1">
    <location>
        <position position="229"/>
    </location>
    <ligand>
        <name>IMP</name>
        <dbReference type="ChEBI" id="CHEBI:58053"/>
        <note>ligand shared between dimeric partners</note>
    </ligand>
</feature>
<feature type="binding site" evidence="1">
    <location>
        <begin position="286"/>
        <end position="292"/>
    </location>
    <ligand>
        <name>substrate</name>
    </ligand>
</feature>
<feature type="binding site" description="in other chain" evidence="1">
    <location>
        <position position="290"/>
    </location>
    <ligand>
        <name>IMP</name>
        <dbReference type="ChEBI" id="CHEBI:58053"/>
        <note>ligand shared between dimeric partners</note>
    </ligand>
</feature>
<feature type="binding site" evidence="1">
    <location>
        <position position="292"/>
    </location>
    <ligand>
        <name>GTP</name>
        <dbReference type="ChEBI" id="CHEBI:37565"/>
    </ligand>
</feature>
<feature type="binding site" evidence="1">
    <location>
        <begin position="318"/>
        <end position="320"/>
    </location>
    <ligand>
        <name>GTP</name>
        <dbReference type="ChEBI" id="CHEBI:37565"/>
    </ligand>
</feature>
<feature type="binding site" evidence="1">
    <location>
        <begin position="405"/>
        <end position="407"/>
    </location>
    <ligand>
        <name>GTP</name>
        <dbReference type="ChEBI" id="CHEBI:37565"/>
    </ligand>
</feature>
<accession>Q6L2M3</accession>
<organism>
    <name type="scientific">Picrophilus torridus (strain ATCC 700027 / DSM 9790 / JCM 10055 / NBRC 100828 / KAW 2/3)</name>
    <dbReference type="NCBI Taxonomy" id="1122961"/>
    <lineage>
        <taxon>Archaea</taxon>
        <taxon>Methanobacteriati</taxon>
        <taxon>Thermoplasmatota</taxon>
        <taxon>Thermoplasmata</taxon>
        <taxon>Thermoplasmatales</taxon>
        <taxon>Picrophilaceae</taxon>
        <taxon>Picrophilus</taxon>
    </lineage>
</organism>
<sequence>MISVVVGMQFGDEGKGKITDYLCSNYDDVVRFNGGNNAGHTVVIDGKKIKFHLIPSGAMQAGTVVLGNGMVIDPLKLLDEIKQLKLAKDNIKIVISGRAGVVTELHRILDKKEEELRSNSSIGTTSQGIGPAYEDKYGRLSIKMYDLNSIKKIKDKLNQLIAMKGLLTGPVDIDRVSNELYSAGSELYEYIGDASEFLEDEYRLGKNILFEGAQGAMLDIDFGTYPFVTSSNTVAGSVSTGSGFSFRRVEDVIGVFKAYTTKVGSGIFPTEIGSDDLRIAGNEYGTTTGRPRRTGWLDLPILRYAAYLNDVNRLAITKLDILGKLNQIKVGTSYIIDGKDYERFPDKIDPESEITVNYETFETWGDISSRISGYLGSGYDALPYNMRKYIEFIEDSLNCSIDIISLGEDRKSTIVK</sequence>
<dbReference type="EC" id="6.3.4.4" evidence="1"/>
<dbReference type="EMBL" id="AE017261">
    <property type="protein sequence ID" value="AAT42779.1"/>
    <property type="status" value="ALT_INIT"/>
    <property type="molecule type" value="Genomic_DNA"/>
</dbReference>
<dbReference type="SMR" id="Q6L2M3"/>
<dbReference type="FunCoup" id="Q6L2M3">
    <property type="interactions" value="246"/>
</dbReference>
<dbReference type="STRING" id="263820.PTO0194"/>
<dbReference type="PaxDb" id="263820-PTO0194"/>
<dbReference type="KEGG" id="pto:PTO0194"/>
<dbReference type="PATRIC" id="fig|263820.9.peg.212"/>
<dbReference type="eggNOG" id="arCOG04387">
    <property type="taxonomic scope" value="Archaea"/>
</dbReference>
<dbReference type="HOGENOM" id="CLU_029848_0_2_2"/>
<dbReference type="InParanoid" id="Q6L2M3"/>
<dbReference type="OrthoDB" id="372247at2157"/>
<dbReference type="UniPathway" id="UPA00075">
    <property type="reaction ID" value="UER00335"/>
</dbReference>
<dbReference type="Proteomes" id="UP000000438">
    <property type="component" value="Chromosome"/>
</dbReference>
<dbReference type="GO" id="GO:0005737">
    <property type="term" value="C:cytoplasm"/>
    <property type="evidence" value="ECO:0007669"/>
    <property type="project" value="UniProtKB-SubCell"/>
</dbReference>
<dbReference type="GO" id="GO:0004019">
    <property type="term" value="F:adenylosuccinate synthase activity"/>
    <property type="evidence" value="ECO:0007669"/>
    <property type="project" value="UniProtKB-UniRule"/>
</dbReference>
<dbReference type="GO" id="GO:0005525">
    <property type="term" value="F:GTP binding"/>
    <property type="evidence" value="ECO:0007669"/>
    <property type="project" value="UniProtKB-UniRule"/>
</dbReference>
<dbReference type="GO" id="GO:0000287">
    <property type="term" value="F:magnesium ion binding"/>
    <property type="evidence" value="ECO:0007669"/>
    <property type="project" value="UniProtKB-UniRule"/>
</dbReference>
<dbReference type="GO" id="GO:0044208">
    <property type="term" value="P:'de novo' AMP biosynthetic process"/>
    <property type="evidence" value="ECO:0007669"/>
    <property type="project" value="UniProtKB-UniRule"/>
</dbReference>
<dbReference type="GO" id="GO:0046040">
    <property type="term" value="P:IMP metabolic process"/>
    <property type="evidence" value="ECO:0007669"/>
    <property type="project" value="TreeGrafter"/>
</dbReference>
<dbReference type="CDD" id="cd03108">
    <property type="entry name" value="AdSS"/>
    <property type="match status" value="1"/>
</dbReference>
<dbReference type="FunFam" id="3.90.170.10:FF:000001">
    <property type="entry name" value="Adenylosuccinate synthetase"/>
    <property type="match status" value="1"/>
</dbReference>
<dbReference type="Gene3D" id="3.40.440.10">
    <property type="entry name" value="Adenylosuccinate Synthetase, subunit A, domain 1"/>
    <property type="match status" value="1"/>
</dbReference>
<dbReference type="Gene3D" id="1.10.300.10">
    <property type="entry name" value="Adenylosuccinate Synthetase, subunit A, domain 2"/>
    <property type="match status" value="1"/>
</dbReference>
<dbReference type="Gene3D" id="3.90.170.10">
    <property type="entry name" value="Adenylosuccinate Synthetase, subunit A, domain 3"/>
    <property type="match status" value="1"/>
</dbReference>
<dbReference type="HAMAP" id="MF_00011">
    <property type="entry name" value="Adenylosucc_synth"/>
    <property type="match status" value="1"/>
</dbReference>
<dbReference type="InterPro" id="IPR018220">
    <property type="entry name" value="Adenylosuccin_syn_GTP-bd"/>
</dbReference>
<dbReference type="InterPro" id="IPR033128">
    <property type="entry name" value="Adenylosuccin_syn_Lys_AS"/>
</dbReference>
<dbReference type="InterPro" id="IPR042109">
    <property type="entry name" value="Adenylosuccinate_synth_dom1"/>
</dbReference>
<dbReference type="InterPro" id="IPR042110">
    <property type="entry name" value="Adenylosuccinate_synth_dom2"/>
</dbReference>
<dbReference type="InterPro" id="IPR042111">
    <property type="entry name" value="Adenylosuccinate_synth_dom3"/>
</dbReference>
<dbReference type="InterPro" id="IPR001114">
    <property type="entry name" value="Adenylosuccinate_synthetase"/>
</dbReference>
<dbReference type="InterPro" id="IPR027417">
    <property type="entry name" value="P-loop_NTPase"/>
</dbReference>
<dbReference type="NCBIfam" id="NF002223">
    <property type="entry name" value="PRK01117.1"/>
    <property type="match status" value="1"/>
</dbReference>
<dbReference type="NCBIfam" id="TIGR00184">
    <property type="entry name" value="purA"/>
    <property type="match status" value="1"/>
</dbReference>
<dbReference type="PANTHER" id="PTHR11846">
    <property type="entry name" value="ADENYLOSUCCINATE SYNTHETASE"/>
    <property type="match status" value="1"/>
</dbReference>
<dbReference type="PANTHER" id="PTHR11846:SF0">
    <property type="entry name" value="ADENYLOSUCCINATE SYNTHETASE"/>
    <property type="match status" value="1"/>
</dbReference>
<dbReference type="Pfam" id="PF00709">
    <property type="entry name" value="Adenylsucc_synt"/>
    <property type="match status" value="1"/>
</dbReference>
<dbReference type="SMART" id="SM00788">
    <property type="entry name" value="Adenylsucc_synt"/>
    <property type="match status" value="1"/>
</dbReference>
<dbReference type="SUPFAM" id="SSF52540">
    <property type="entry name" value="P-loop containing nucleoside triphosphate hydrolases"/>
    <property type="match status" value="1"/>
</dbReference>
<dbReference type="PROSITE" id="PS01266">
    <property type="entry name" value="ADENYLOSUCCIN_SYN_1"/>
    <property type="match status" value="1"/>
</dbReference>
<dbReference type="PROSITE" id="PS00513">
    <property type="entry name" value="ADENYLOSUCCIN_SYN_2"/>
    <property type="match status" value="1"/>
</dbReference>
<reference key="1">
    <citation type="journal article" date="2004" name="Proc. Natl. Acad. Sci. U.S.A.">
        <title>Genome sequence of Picrophilus torridus and its implications for life around pH 0.</title>
        <authorList>
            <person name="Fuetterer O."/>
            <person name="Angelov A."/>
            <person name="Liesegang H."/>
            <person name="Gottschalk G."/>
            <person name="Schleper C."/>
            <person name="Schepers B."/>
            <person name="Dock C."/>
            <person name="Antranikian G."/>
            <person name="Liebl W."/>
        </authorList>
    </citation>
    <scope>NUCLEOTIDE SEQUENCE [LARGE SCALE GENOMIC DNA]</scope>
    <source>
        <strain>ATCC 700027 / DSM 9790 / JCM 10055 / NBRC 100828 / KAW 2/3</strain>
    </source>
</reference>
<name>PURA_PICTO</name>